<sequence>MSWIERIKSNITPTRKASIPEGVWTKCDSCGQVLYRAELERNLEVCPKCDHHMRMSARNRLHSLLDEGSLVELGSELEPKDVLKFRDSKKYKDRLASAQKETGEKDALVVMKGTLHGMPVVAAAFEFAFMGGSMGSVVGARFVRAVEQALEDNCPLVCFSASGGARMQEALMSLMQMAKTSAALAKMQERGLPYISVLTDPTMGGVSASFAMLGDLNIAEPKALIGFAGPRVIEQTVREKLPPGFQRSEFLIEKGAIDMIVRRPEMRLKLASILAKLMNLPAPNPDAPREGVVVPPAPDQESEA</sequence>
<feature type="chain" id="PRO_0000359060" description="Acetyl-coenzyme A carboxylase carboxyl transferase subunit beta">
    <location>
        <begin position="1"/>
        <end position="304"/>
    </location>
</feature>
<feature type="domain" description="CoA carboxyltransferase N-terminal" evidence="2">
    <location>
        <begin position="23"/>
        <end position="292"/>
    </location>
</feature>
<feature type="zinc finger region" description="C4-type" evidence="1">
    <location>
        <begin position="27"/>
        <end position="49"/>
    </location>
</feature>
<feature type="region of interest" description="Disordered" evidence="3">
    <location>
        <begin position="283"/>
        <end position="304"/>
    </location>
</feature>
<feature type="binding site" evidence="1">
    <location>
        <position position="27"/>
    </location>
    <ligand>
        <name>Zn(2+)</name>
        <dbReference type="ChEBI" id="CHEBI:29105"/>
    </ligand>
</feature>
<feature type="binding site" evidence="1">
    <location>
        <position position="30"/>
    </location>
    <ligand>
        <name>Zn(2+)</name>
        <dbReference type="ChEBI" id="CHEBI:29105"/>
    </ligand>
</feature>
<feature type="binding site" evidence="1">
    <location>
        <position position="46"/>
    </location>
    <ligand>
        <name>Zn(2+)</name>
        <dbReference type="ChEBI" id="CHEBI:29105"/>
    </ligand>
</feature>
<feature type="binding site" evidence="1">
    <location>
        <position position="49"/>
    </location>
    <ligand>
        <name>Zn(2+)</name>
        <dbReference type="ChEBI" id="CHEBI:29105"/>
    </ligand>
</feature>
<accession>Q8XFJ5</accession>
<accession>Q7AMK8</accession>
<dbReference type="EC" id="2.1.3.15" evidence="1"/>
<dbReference type="EMBL" id="AE014613">
    <property type="protein sequence ID" value="AAO68204.1"/>
    <property type="molecule type" value="Genomic_DNA"/>
</dbReference>
<dbReference type="EMBL" id="AL513382">
    <property type="protein sequence ID" value="CAD07598.1"/>
    <property type="molecule type" value="Genomic_DNA"/>
</dbReference>
<dbReference type="RefSeq" id="NP_456908.1">
    <property type="nucleotide sequence ID" value="NC_003198.1"/>
</dbReference>
<dbReference type="RefSeq" id="WP_000118383.1">
    <property type="nucleotide sequence ID" value="NZ_WSUR01000029.1"/>
</dbReference>
<dbReference type="SMR" id="Q8XFJ5"/>
<dbReference type="STRING" id="220341.gene:17586495"/>
<dbReference type="KEGG" id="stt:t0498"/>
<dbReference type="KEGG" id="sty:STY2597"/>
<dbReference type="PATRIC" id="fig|220341.7.peg.2630"/>
<dbReference type="eggNOG" id="COG0777">
    <property type="taxonomic scope" value="Bacteria"/>
</dbReference>
<dbReference type="HOGENOM" id="CLU_015486_1_0_6"/>
<dbReference type="OMA" id="PEGLWIK"/>
<dbReference type="OrthoDB" id="9772975at2"/>
<dbReference type="UniPathway" id="UPA00655">
    <property type="reaction ID" value="UER00711"/>
</dbReference>
<dbReference type="Proteomes" id="UP000000541">
    <property type="component" value="Chromosome"/>
</dbReference>
<dbReference type="Proteomes" id="UP000002670">
    <property type="component" value="Chromosome"/>
</dbReference>
<dbReference type="GO" id="GO:0009329">
    <property type="term" value="C:acetate CoA-transferase complex"/>
    <property type="evidence" value="ECO:0007669"/>
    <property type="project" value="TreeGrafter"/>
</dbReference>
<dbReference type="GO" id="GO:0003989">
    <property type="term" value="F:acetyl-CoA carboxylase activity"/>
    <property type="evidence" value="ECO:0007669"/>
    <property type="project" value="InterPro"/>
</dbReference>
<dbReference type="GO" id="GO:0005524">
    <property type="term" value="F:ATP binding"/>
    <property type="evidence" value="ECO:0007669"/>
    <property type="project" value="UniProtKB-KW"/>
</dbReference>
<dbReference type="GO" id="GO:0016743">
    <property type="term" value="F:carboxyl- or carbamoyltransferase activity"/>
    <property type="evidence" value="ECO:0007669"/>
    <property type="project" value="UniProtKB-UniRule"/>
</dbReference>
<dbReference type="GO" id="GO:0008270">
    <property type="term" value="F:zinc ion binding"/>
    <property type="evidence" value="ECO:0007669"/>
    <property type="project" value="UniProtKB-UniRule"/>
</dbReference>
<dbReference type="GO" id="GO:0006633">
    <property type="term" value="P:fatty acid biosynthetic process"/>
    <property type="evidence" value="ECO:0007669"/>
    <property type="project" value="UniProtKB-KW"/>
</dbReference>
<dbReference type="GO" id="GO:2001295">
    <property type="term" value="P:malonyl-CoA biosynthetic process"/>
    <property type="evidence" value="ECO:0007669"/>
    <property type="project" value="UniProtKB-UniRule"/>
</dbReference>
<dbReference type="FunFam" id="3.90.226.10:FF:000013">
    <property type="entry name" value="Acetyl-coenzyme A carboxylase carboxyl transferase subunit beta"/>
    <property type="match status" value="1"/>
</dbReference>
<dbReference type="Gene3D" id="3.90.226.10">
    <property type="entry name" value="2-enoyl-CoA Hydratase, Chain A, domain 1"/>
    <property type="match status" value="1"/>
</dbReference>
<dbReference type="HAMAP" id="MF_01395">
    <property type="entry name" value="AcetylCoA_CT_beta"/>
    <property type="match status" value="1"/>
</dbReference>
<dbReference type="InterPro" id="IPR034733">
    <property type="entry name" value="AcCoA_carboxyl_beta"/>
</dbReference>
<dbReference type="InterPro" id="IPR000438">
    <property type="entry name" value="Acetyl_CoA_COase_Trfase_b_su"/>
</dbReference>
<dbReference type="InterPro" id="IPR029045">
    <property type="entry name" value="ClpP/crotonase-like_dom_sf"/>
</dbReference>
<dbReference type="InterPro" id="IPR011762">
    <property type="entry name" value="COA_CT_N"/>
</dbReference>
<dbReference type="InterPro" id="IPR041010">
    <property type="entry name" value="Znf-ACC"/>
</dbReference>
<dbReference type="NCBIfam" id="TIGR00515">
    <property type="entry name" value="accD"/>
    <property type="match status" value="1"/>
</dbReference>
<dbReference type="PANTHER" id="PTHR42995">
    <property type="entry name" value="ACETYL-COENZYME A CARBOXYLASE CARBOXYL TRANSFERASE SUBUNIT BETA, CHLOROPLASTIC"/>
    <property type="match status" value="1"/>
</dbReference>
<dbReference type="PANTHER" id="PTHR42995:SF5">
    <property type="entry name" value="ACETYL-COENZYME A CARBOXYLASE CARBOXYL TRANSFERASE SUBUNIT BETA, CHLOROPLASTIC"/>
    <property type="match status" value="1"/>
</dbReference>
<dbReference type="Pfam" id="PF01039">
    <property type="entry name" value="Carboxyl_trans"/>
    <property type="match status" value="1"/>
</dbReference>
<dbReference type="Pfam" id="PF17848">
    <property type="entry name" value="Zn_ribbon_ACC"/>
    <property type="match status" value="1"/>
</dbReference>
<dbReference type="PRINTS" id="PR01070">
    <property type="entry name" value="ACCCTRFRASEB"/>
</dbReference>
<dbReference type="SUPFAM" id="SSF52096">
    <property type="entry name" value="ClpP/crotonase"/>
    <property type="match status" value="1"/>
</dbReference>
<dbReference type="PROSITE" id="PS50980">
    <property type="entry name" value="COA_CT_NTER"/>
    <property type="match status" value="1"/>
</dbReference>
<organism>
    <name type="scientific">Salmonella typhi</name>
    <dbReference type="NCBI Taxonomy" id="90370"/>
    <lineage>
        <taxon>Bacteria</taxon>
        <taxon>Pseudomonadati</taxon>
        <taxon>Pseudomonadota</taxon>
        <taxon>Gammaproteobacteria</taxon>
        <taxon>Enterobacterales</taxon>
        <taxon>Enterobacteriaceae</taxon>
        <taxon>Salmonella</taxon>
    </lineage>
</organism>
<keyword id="KW-0067">ATP-binding</keyword>
<keyword id="KW-0963">Cytoplasm</keyword>
<keyword id="KW-0275">Fatty acid biosynthesis</keyword>
<keyword id="KW-0276">Fatty acid metabolism</keyword>
<keyword id="KW-0444">Lipid biosynthesis</keyword>
<keyword id="KW-0443">Lipid metabolism</keyword>
<keyword id="KW-0479">Metal-binding</keyword>
<keyword id="KW-0547">Nucleotide-binding</keyword>
<keyword id="KW-0808">Transferase</keyword>
<keyword id="KW-0862">Zinc</keyword>
<keyword id="KW-0863">Zinc-finger</keyword>
<name>ACCD_SALTI</name>
<comment type="function">
    <text evidence="1">Component of the acetyl coenzyme A carboxylase (ACC) complex. Biotin carboxylase (BC) catalyzes the carboxylation of biotin on its carrier protein (BCCP) and then the CO(2) group is transferred by the transcarboxylase to acetyl-CoA to form malonyl-CoA.</text>
</comment>
<comment type="catalytic activity">
    <reaction evidence="1">
        <text>N(6)-carboxybiotinyl-L-lysyl-[protein] + acetyl-CoA = N(6)-biotinyl-L-lysyl-[protein] + malonyl-CoA</text>
        <dbReference type="Rhea" id="RHEA:54728"/>
        <dbReference type="Rhea" id="RHEA-COMP:10505"/>
        <dbReference type="Rhea" id="RHEA-COMP:10506"/>
        <dbReference type="ChEBI" id="CHEBI:57288"/>
        <dbReference type="ChEBI" id="CHEBI:57384"/>
        <dbReference type="ChEBI" id="CHEBI:83144"/>
        <dbReference type="ChEBI" id="CHEBI:83145"/>
        <dbReference type="EC" id="2.1.3.15"/>
    </reaction>
</comment>
<comment type="cofactor">
    <cofactor evidence="1">
        <name>Zn(2+)</name>
        <dbReference type="ChEBI" id="CHEBI:29105"/>
    </cofactor>
    <text evidence="1">Binds 1 zinc ion per subunit.</text>
</comment>
<comment type="pathway">
    <text evidence="1">Lipid metabolism; malonyl-CoA biosynthesis; malonyl-CoA from acetyl-CoA: step 1/1.</text>
</comment>
<comment type="subunit">
    <text evidence="1">Acetyl-CoA carboxylase is a heterohexamer composed of biotin carboxyl carrier protein (AccB), biotin carboxylase (AccC) and two subunits each of ACCase subunit alpha (AccA) and ACCase subunit beta (AccD).</text>
</comment>
<comment type="subcellular location">
    <subcellularLocation>
        <location evidence="1">Cytoplasm</location>
    </subcellularLocation>
</comment>
<comment type="similarity">
    <text evidence="1">Belongs to the AccD/PCCB family.</text>
</comment>
<proteinExistence type="inferred from homology"/>
<reference key="1">
    <citation type="journal article" date="2003" name="J. Bacteriol.">
        <title>Comparative genomics of Salmonella enterica serovar Typhi strains Ty2 and CT18.</title>
        <authorList>
            <person name="Deng W."/>
            <person name="Liou S.-R."/>
            <person name="Plunkett G. III"/>
            <person name="Mayhew G.F."/>
            <person name="Rose D.J."/>
            <person name="Burland V."/>
            <person name="Kodoyianni V."/>
            <person name="Schwartz D.C."/>
            <person name="Blattner F.R."/>
        </authorList>
    </citation>
    <scope>NUCLEOTIDE SEQUENCE [LARGE SCALE GENOMIC DNA]</scope>
    <source>
        <strain>ATCC 700931 / Ty2</strain>
    </source>
</reference>
<reference key="2">
    <citation type="journal article" date="2001" name="Nature">
        <title>Complete genome sequence of a multiple drug resistant Salmonella enterica serovar Typhi CT18.</title>
        <authorList>
            <person name="Parkhill J."/>
            <person name="Dougan G."/>
            <person name="James K.D."/>
            <person name="Thomson N.R."/>
            <person name="Pickard D."/>
            <person name="Wain J."/>
            <person name="Churcher C.M."/>
            <person name="Mungall K.L."/>
            <person name="Bentley S.D."/>
            <person name="Holden M.T.G."/>
            <person name="Sebaihia M."/>
            <person name="Baker S."/>
            <person name="Basham D."/>
            <person name="Brooks K."/>
            <person name="Chillingworth T."/>
            <person name="Connerton P."/>
            <person name="Cronin A."/>
            <person name="Davis P."/>
            <person name="Davies R.M."/>
            <person name="Dowd L."/>
            <person name="White N."/>
            <person name="Farrar J."/>
            <person name="Feltwell T."/>
            <person name="Hamlin N."/>
            <person name="Haque A."/>
            <person name="Hien T.T."/>
            <person name="Holroyd S."/>
            <person name="Jagels K."/>
            <person name="Krogh A."/>
            <person name="Larsen T.S."/>
            <person name="Leather S."/>
            <person name="Moule S."/>
            <person name="O'Gaora P."/>
            <person name="Parry C."/>
            <person name="Quail M.A."/>
            <person name="Rutherford K.M."/>
            <person name="Simmonds M."/>
            <person name="Skelton J."/>
            <person name="Stevens K."/>
            <person name="Whitehead S."/>
            <person name="Barrell B.G."/>
        </authorList>
    </citation>
    <scope>NUCLEOTIDE SEQUENCE [LARGE SCALE GENOMIC DNA]</scope>
    <source>
        <strain>CT18</strain>
    </source>
</reference>
<gene>
    <name evidence="1" type="primary">accD</name>
    <name type="ordered locus">STY2597</name>
    <name type="ordered locus">t0498</name>
</gene>
<protein>
    <recommendedName>
        <fullName evidence="1">Acetyl-coenzyme A carboxylase carboxyl transferase subunit beta</fullName>
        <shortName evidence="1">ACCase subunit beta</shortName>
        <shortName evidence="1">Acetyl-CoA carboxylase carboxyltransferase subunit beta</shortName>
        <ecNumber evidence="1">2.1.3.15</ecNumber>
    </recommendedName>
</protein>
<evidence type="ECO:0000255" key="1">
    <source>
        <dbReference type="HAMAP-Rule" id="MF_01395"/>
    </source>
</evidence>
<evidence type="ECO:0000255" key="2">
    <source>
        <dbReference type="PROSITE-ProRule" id="PRU01136"/>
    </source>
</evidence>
<evidence type="ECO:0000256" key="3">
    <source>
        <dbReference type="SAM" id="MobiDB-lite"/>
    </source>
</evidence>